<keyword id="KW-0285">Flavoprotein</keyword>
<keyword id="KW-0288">FMN</keyword>
<keyword id="KW-0637">Prenyltransferase</keyword>
<keyword id="KW-0808">Transferase</keyword>
<comment type="function">
    <text evidence="1">Flavin prenyltransferase that catalyzes the synthesis of the prenylated FMN cofactor (prenyl-FMN) for 4-hydroxy-3-polyprenylbenzoic acid decarboxylase UbiD. The prenyltransferase is metal-independent and links a dimethylallyl moiety from dimethylallyl monophosphate (DMAP) to the flavin N5 and C6 atoms of FMN.</text>
</comment>
<comment type="catalytic activity">
    <reaction evidence="1">
        <text>dimethylallyl phosphate + FMNH2 = prenylated FMNH2 + phosphate</text>
        <dbReference type="Rhea" id="RHEA:37743"/>
        <dbReference type="ChEBI" id="CHEBI:43474"/>
        <dbReference type="ChEBI" id="CHEBI:57618"/>
        <dbReference type="ChEBI" id="CHEBI:87467"/>
        <dbReference type="ChEBI" id="CHEBI:88052"/>
        <dbReference type="EC" id="2.5.1.129"/>
    </reaction>
</comment>
<comment type="similarity">
    <text evidence="1">Belongs to the UbiX/PAD1 family.</text>
</comment>
<reference key="1">
    <citation type="journal article" date="1998" name="DNA Res.">
        <title>Complete sequence and gene organization of the genome of a hyper-thermophilic archaebacterium, Pyrococcus horikoshii OT3.</title>
        <authorList>
            <person name="Kawarabayasi Y."/>
            <person name="Sawada M."/>
            <person name="Horikawa H."/>
            <person name="Haikawa Y."/>
            <person name="Hino Y."/>
            <person name="Yamamoto S."/>
            <person name="Sekine M."/>
            <person name="Baba S."/>
            <person name="Kosugi H."/>
            <person name="Hosoyama A."/>
            <person name="Nagai Y."/>
            <person name="Sakai M."/>
            <person name="Ogura K."/>
            <person name="Otsuka R."/>
            <person name="Nakazawa H."/>
            <person name="Takamiya M."/>
            <person name="Ohfuku Y."/>
            <person name="Funahashi T."/>
            <person name="Tanaka T."/>
            <person name="Kudoh Y."/>
            <person name="Yamazaki J."/>
            <person name="Kushida N."/>
            <person name="Oguchi A."/>
            <person name="Aoki K."/>
            <person name="Yoshizawa T."/>
            <person name="Nakamura Y."/>
            <person name="Robb F.T."/>
            <person name="Horikoshi K."/>
            <person name="Masuchi Y."/>
            <person name="Shizuya H."/>
            <person name="Kikuchi H."/>
        </authorList>
    </citation>
    <scope>NUCLEOTIDE SEQUENCE [LARGE SCALE GENOMIC DNA]</scope>
    <source>
        <strain>ATCC 700860 / DSM 12428 / JCM 9974 / NBRC 100139 / OT-3</strain>
    </source>
</reference>
<sequence length="181" mass="20017">MKIIVAITGASGSIYGIKLYEILKKLGHDVILLASKTGIKVAKYETGMEITPDFDEDDLFAPIASGSYPFDAMVIAPCSMKTLGAIANGFSYNLITRAADVTLKERRKLILLIRETPLNLVHVQNMLKIIQAGGIIMPASPAFYTKPKTIDDMVNFIIGKILDLLGITHNLYRRWGMREDD</sequence>
<dbReference type="EC" id="2.5.1.129" evidence="1"/>
<dbReference type="EMBL" id="BA000001">
    <property type="protein sequence ID" value="BAA30111.1"/>
    <property type="molecule type" value="Genomic_DNA"/>
</dbReference>
<dbReference type="PIR" id="A71094">
    <property type="entry name" value="A71094"/>
</dbReference>
<dbReference type="RefSeq" id="WP_010885100.1">
    <property type="nucleotide sequence ID" value="NC_000961.1"/>
</dbReference>
<dbReference type="SMR" id="O58742"/>
<dbReference type="STRING" id="70601.gene:9377971"/>
<dbReference type="EnsemblBacteria" id="BAA30111">
    <property type="protein sequence ID" value="BAA30111"/>
    <property type="gene ID" value="BAA30111"/>
</dbReference>
<dbReference type="GeneID" id="1443335"/>
<dbReference type="KEGG" id="pho:PH1014"/>
<dbReference type="eggNOG" id="arCOG01703">
    <property type="taxonomic scope" value="Archaea"/>
</dbReference>
<dbReference type="OrthoDB" id="9540at2157"/>
<dbReference type="Proteomes" id="UP000000752">
    <property type="component" value="Chromosome"/>
</dbReference>
<dbReference type="GO" id="GO:0016831">
    <property type="term" value="F:carboxy-lyase activity"/>
    <property type="evidence" value="ECO:0007669"/>
    <property type="project" value="TreeGrafter"/>
</dbReference>
<dbReference type="GO" id="GO:0106141">
    <property type="term" value="F:flavin prenyltransferase activity"/>
    <property type="evidence" value="ECO:0007669"/>
    <property type="project" value="UniProtKB-EC"/>
</dbReference>
<dbReference type="FunFam" id="3.40.50.1950:FF:000001">
    <property type="entry name" value="Flavin prenyltransferase UbiX"/>
    <property type="match status" value="1"/>
</dbReference>
<dbReference type="Gene3D" id="3.40.50.1950">
    <property type="entry name" value="Flavin prenyltransferase-like"/>
    <property type="match status" value="1"/>
</dbReference>
<dbReference type="HAMAP" id="MF_01984">
    <property type="entry name" value="ubiX_pad"/>
    <property type="match status" value="1"/>
</dbReference>
<dbReference type="InterPro" id="IPR036551">
    <property type="entry name" value="Flavin_trans-like"/>
</dbReference>
<dbReference type="InterPro" id="IPR003382">
    <property type="entry name" value="Flavoprotein"/>
</dbReference>
<dbReference type="InterPro" id="IPR004507">
    <property type="entry name" value="UbiX-like"/>
</dbReference>
<dbReference type="NCBIfam" id="NF004685">
    <property type="entry name" value="PRK06029.1"/>
    <property type="match status" value="1"/>
</dbReference>
<dbReference type="NCBIfam" id="TIGR00421">
    <property type="entry name" value="ubiX_pad"/>
    <property type="match status" value="1"/>
</dbReference>
<dbReference type="PANTHER" id="PTHR43374">
    <property type="entry name" value="FLAVIN PRENYLTRANSFERASE"/>
    <property type="match status" value="1"/>
</dbReference>
<dbReference type="PANTHER" id="PTHR43374:SF1">
    <property type="entry name" value="FLAVIN PRENYLTRANSFERASE PAD1, MITOCHONDRIAL"/>
    <property type="match status" value="1"/>
</dbReference>
<dbReference type="Pfam" id="PF02441">
    <property type="entry name" value="Flavoprotein"/>
    <property type="match status" value="1"/>
</dbReference>
<dbReference type="SUPFAM" id="SSF52507">
    <property type="entry name" value="Homo-oligomeric flavin-containing Cys decarboxylases, HFCD"/>
    <property type="match status" value="1"/>
</dbReference>
<gene>
    <name evidence="1" type="primary">ubiX</name>
    <name type="ordered locus">PH1014</name>
</gene>
<evidence type="ECO:0000255" key="1">
    <source>
        <dbReference type="HAMAP-Rule" id="MF_01984"/>
    </source>
</evidence>
<feature type="chain" id="PRO_0000134981" description="Flavin prenyltransferase UbiX">
    <location>
        <begin position="1"/>
        <end position="181"/>
    </location>
</feature>
<feature type="binding site" evidence="1">
    <location>
        <begin position="9"/>
        <end position="11"/>
    </location>
    <ligand>
        <name>FMN</name>
        <dbReference type="ChEBI" id="CHEBI:58210"/>
    </ligand>
</feature>
<feature type="binding site" evidence="1">
    <location>
        <position position="35"/>
    </location>
    <ligand>
        <name>FMN</name>
        <dbReference type="ChEBI" id="CHEBI:58210"/>
    </ligand>
</feature>
<feature type="binding site" evidence="1">
    <location>
        <begin position="79"/>
        <end position="82"/>
    </location>
    <ligand>
        <name>FMN</name>
        <dbReference type="ChEBI" id="CHEBI:58210"/>
    </ligand>
</feature>
<feature type="binding site" evidence="1">
    <location>
        <position position="114"/>
    </location>
    <ligand>
        <name>FMN</name>
        <dbReference type="ChEBI" id="CHEBI:58210"/>
    </ligand>
</feature>
<feature type="binding site" evidence="1">
    <location>
        <position position="144"/>
    </location>
    <ligand>
        <name>dimethylallyl phosphate</name>
        <dbReference type="ChEBI" id="CHEBI:88052"/>
    </ligand>
</feature>
<feature type="binding site" evidence="1">
    <location>
        <position position="160"/>
    </location>
    <ligand>
        <name>dimethylallyl phosphate</name>
        <dbReference type="ChEBI" id="CHEBI:88052"/>
    </ligand>
</feature>
<protein>
    <recommendedName>
        <fullName evidence="1">Flavin prenyltransferase UbiX</fullName>
        <ecNumber evidence="1">2.5.1.129</ecNumber>
    </recommendedName>
</protein>
<organism>
    <name type="scientific">Pyrococcus horikoshii (strain ATCC 700860 / DSM 12428 / JCM 9974 / NBRC 100139 / OT-3)</name>
    <dbReference type="NCBI Taxonomy" id="70601"/>
    <lineage>
        <taxon>Archaea</taxon>
        <taxon>Methanobacteriati</taxon>
        <taxon>Methanobacteriota</taxon>
        <taxon>Thermococci</taxon>
        <taxon>Thermococcales</taxon>
        <taxon>Thermococcaceae</taxon>
        <taxon>Pyrococcus</taxon>
    </lineage>
</organism>
<name>UBIX_PYRHO</name>
<proteinExistence type="inferred from homology"/>
<accession>O58742</accession>